<name>OPT_BOVIN</name>
<dbReference type="EMBL" id="AY249537">
    <property type="protein sequence ID" value="AAP76303.1"/>
    <property type="molecule type" value="mRNA"/>
</dbReference>
<dbReference type="RefSeq" id="NP_991339.1">
    <property type="nucleotide sequence ID" value="NM_205770.1"/>
</dbReference>
<dbReference type="RefSeq" id="XP_005216715.1">
    <property type="nucleotide sequence ID" value="XM_005216658.5"/>
</dbReference>
<dbReference type="RefSeq" id="XP_059731231.1">
    <property type="nucleotide sequence ID" value="XM_059875248.1"/>
</dbReference>
<dbReference type="SMR" id="P58874"/>
<dbReference type="FunCoup" id="P58874">
    <property type="interactions" value="2"/>
</dbReference>
<dbReference type="STRING" id="9913.ENSBTAP00000018286"/>
<dbReference type="GlyCosmos" id="P58874">
    <property type="glycosylation" value="1 site, No reported glycans"/>
</dbReference>
<dbReference type="GlyGen" id="P58874">
    <property type="glycosylation" value="1 site"/>
</dbReference>
<dbReference type="PaxDb" id="9913-ENSBTAP00000018286"/>
<dbReference type="Ensembl" id="ENSBTAT00000018286.7">
    <property type="protein sequence ID" value="ENSBTAP00000018286.5"/>
    <property type="gene ID" value="ENSBTAG00000013764.7"/>
</dbReference>
<dbReference type="GeneID" id="404034"/>
<dbReference type="KEGG" id="bta:404034"/>
<dbReference type="CTD" id="26254"/>
<dbReference type="VEuPathDB" id="HostDB:ENSBTAG00000013764"/>
<dbReference type="VGNC" id="VGNC:32441">
    <property type="gene designation" value="OPTC"/>
</dbReference>
<dbReference type="eggNOG" id="KOG0619">
    <property type="taxonomic scope" value="Eukaryota"/>
</dbReference>
<dbReference type="GeneTree" id="ENSGT00940000154248"/>
<dbReference type="HOGENOM" id="CLU_067583_2_0_1"/>
<dbReference type="InParanoid" id="P58874"/>
<dbReference type="OMA" id="EEHKYTR"/>
<dbReference type="OrthoDB" id="676979at2759"/>
<dbReference type="TreeFam" id="TF351924"/>
<dbReference type="Reactome" id="R-BTA-1474228">
    <property type="pathway name" value="Degradation of the extracellular matrix"/>
</dbReference>
<dbReference type="Proteomes" id="UP000009136">
    <property type="component" value="Chromosome 16"/>
</dbReference>
<dbReference type="Bgee" id="ENSBTAG00000013764">
    <property type="expression patterns" value="Expressed in anterior segment of eyeball and 78 other cell types or tissues"/>
</dbReference>
<dbReference type="GO" id="GO:0031012">
    <property type="term" value="C:extracellular matrix"/>
    <property type="evidence" value="ECO:0000250"/>
    <property type="project" value="UniProtKB"/>
</dbReference>
<dbReference type="GO" id="GO:0005576">
    <property type="term" value="C:extracellular region"/>
    <property type="evidence" value="ECO:0007669"/>
    <property type="project" value="UniProtKB-KW"/>
</dbReference>
<dbReference type="GO" id="GO:0001525">
    <property type="term" value="P:angiogenesis"/>
    <property type="evidence" value="ECO:0007669"/>
    <property type="project" value="Ensembl"/>
</dbReference>
<dbReference type="GO" id="GO:0061975">
    <property type="term" value="P:articular cartilage development"/>
    <property type="evidence" value="ECO:0000318"/>
    <property type="project" value="GO_Central"/>
</dbReference>
<dbReference type="GO" id="GO:0060348">
    <property type="term" value="P:bone development"/>
    <property type="evidence" value="ECO:0000318"/>
    <property type="project" value="GO_Central"/>
</dbReference>
<dbReference type="GO" id="GO:0030199">
    <property type="term" value="P:collagen fibril organization"/>
    <property type="evidence" value="ECO:0000250"/>
    <property type="project" value="UniProtKB"/>
</dbReference>
<dbReference type="GO" id="GO:0016525">
    <property type="term" value="P:negative regulation of angiogenesis"/>
    <property type="evidence" value="ECO:0007669"/>
    <property type="project" value="Ensembl"/>
</dbReference>
<dbReference type="FunFam" id="3.80.10.10:FF:000167">
    <property type="entry name" value="epiphycan"/>
    <property type="match status" value="1"/>
</dbReference>
<dbReference type="Gene3D" id="3.80.10.10">
    <property type="entry name" value="Ribonuclease Inhibitor"/>
    <property type="match status" value="1"/>
</dbReference>
<dbReference type="InterPro" id="IPR001611">
    <property type="entry name" value="Leu-rich_rpt"/>
</dbReference>
<dbReference type="InterPro" id="IPR003591">
    <property type="entry name" value="Leu-rich_rpt_typical-subtyp"/>
</dbReference>
<dbReference type="InterPro" id="IPR032675">
    <property type="entry name" value="LRR_dom_sf"/>
</dbReference>
<dbReference type="InterPro" id="IPR043547">
    <property type="entry name" value="Mimecan/Epiphycan/Opticin"/>
</dbReference>
<dbReference type="PANTHER" id="PTHR46269">
    <property type="entry name" value="EPIPHYCAN-RELATED"/>
    <property type="match status" value="1"/>
</dbReference>
<dbReference type="PANTHER" id="PTHR46269:SF4">
    <property type="entry name" value="OPTICIN"/>
    <property type="match status" value="1"/>
</dbReference>
<dbReference type="Pfam" id="PF13855">
    <property type="entry name" value="LRR_8"/>
    <property type="match status" value="1"/>
</dbReference>
<dbReference type="SMART" id="SM00369">
    <property type="entry name" value="LRR_TYP"/>
    <property type="match status" value="4"/>
</dbReference>
<dbReference type="SUPFAM" id="SSF52058">
    <property type="entry name" value="L domain-like"/>
    <property type="match status" value="1"/>
</dbReference>
<dbReference type="PROSITE" id="PS51450">
    <property type="entry name" value="LRR"/>
    <property type="match status" value="4"/>
</dbReference>
<sequence length="321" mass="35731">MKLLALLSLLILMLQEARTASLSEEREGDPYAILHLGDYVLSLDNYDEVIDPSNYDELIDYGDQLPQVKGTSLASLTRTRFTQSTEAARTLPSNPTTARPPTLGLLAAPANHGLPTCLICVCLGSSVYCDDADLENIPPLPQTTAYLYARFNRISHIRAGDFKGLTKLKRIDLSGNSISSIDDKALRLLPALRDLILPENKLVALPTLPTSIEVLDVRMNRLQSSGIQPEAFRALEKLQFLYLADNLLDAIPPSLPLSLRSLHLQNNMIETMQRDAFCDAEEHRHTRRPLEDIRLDGNPINLSLFPSAYFCLPRLPTGRFV</sequence>
<accession>P58874</accession>
<accession>P83285</accession>
<accession>Q6X8P9</accession>
<organism>
    <name type="scientific">Bos taurus</name>
    <name type="common">Bovine</name>
    <dbReference type="NCBI Taxonomy" id="9913"/>
    <lineage>
        <taxon>Eukaryota</taxon>
        <taxon>Metazoa</taxon>
        <taxon>Chordata</taxon>
        <taxon>Craniata</taxon>
        <taxon>Vertebrata</taxon>
        <taxon>Euteleostomi</taxon>
        <taxon>Mammalia</taxon>
        <taxon>Eutheria</taxon>
        <taxon>Laurasiatheria</taxon>
        <taxon>Artiodactyla</taxon>
        <taxon>Ruminantia</taxon>
        <taxon>Pecora</taxon>
        <taxon>Bovidae</taxon>
        <taxon>Bovinae</taxon>
        <taxon>Bos</taxon>
    </lineage>
</organism>
<keyword id="KW-0903">Direct protein sequencing</keyword>
<keyword id="KW-1015">Disulfide bond</keyword>
<keyword id="KW-0272">Extracellular matrix</keyword>
<keyword id="KW-0325">Glycoprotein</keyword>
<keyword id="KW-0433">Leucine-rich repeat</keyword>
<keyword id="KW-1185">Reference proteome</keyword>
<keyword id="KW-0677">Repeat</keyword>
<keyword id="KW-0964">Secreted</keyword>
<keyword id="KW-0732">Signal</keyword>
<keyword id="KW-0765">Sulfation</keyword>
<feature type="signal peptide" evidence="4">
    <location>
        <begin position="1"/>
        <end position="19"/>
    </location>
</feature>
<feature type="chain" id="PRO_0000180087" description="Opticin">
    <location>
        <begin position="20"/>
        <end position="321"/>
    </location>
</feature>
<feature type="domain" description="LRRNT">
    <location>
        <begin position="105"/>
        <end position="142"/>
    </location>
</feature>
<feature type="repeat" description="LRR 1">
    <location>
        <begin position="143"/>
        <end position="164"/>
    </location>
</feature>
<feature type="repeat" description="LRR 2">
    <location>
        <begin position="167"/>
        <end position="188"/>
    </location>
</feature>
<feature type="repeat" description="LRR 3">
    <location>
        <begin position="191"/>
        <end position="212"/>
    </location>
</feature>
<feature type="repeat" description="LRR 4">
    <location>
        <begin position="237"/>
        <end position="258"/>
    </location>
</feature>
<feature type="repeat" description="LRR 5">
    <location>
        <begin position="259"/>
        <end position="279"/>
    </location>
</feature>
<feature type="repeat" description="LRR 6">
    <location>
        <begin position="289"/>
        <end position="309"/>
    </location>
</feature>
<feature type="site" description="Cleavage; by MMP7" evidence="3">
    <location>
        <begin position="20"/>
        <end position="21"/>
    </location>
</feature>
<feature type="site" description="Cleavage; by MMP13" evidence="7">
    <location>
        <begin position="104"/>
        <end position="105"/>
    </location>
</feature>
<feature type="site" description="Cleavage; by MMP13" evidence="7">
    <location>
        <begin position="109"/>
        <end position="110"/>
    </location>
</feature>
<feature type="modified residue" description="Sulfotyrosine" evidence="4">
    <location>
        <position position="61"/>
    </location>
</feature>
<feature type="glycosylation site" description="N-linked (GlcNAc...) asparagine" evidence="4">
    <location>
        <position position="301"/>
    </location>
</feature>
<feature type="disulfide bond" evidence="1">
    <location>
        <begin position="278"/>
        <end position="311"/>
    </location>
</feature>
<feature type="sequence conflict" description="In Ref. 2; AA sequence." evidence="8" ref="2">
    <original>S</original>
    <variation>P</variation>
    <location>
        <position position="23"/>
    </location>
</feature>
<feature type="sequence conflict" description="In Ref. 2; AA sequence." evidence="8" ref="2">
    <original>L</original>
    <variation>Q</variation>
    <location>
        <position position="189"/>
    </location>
</feature>
<feature type="sequence conflict" description="In Ref. 2; AA sequence." evidence="8" ref="2">
    <original>L</original>
    <variation>A</variation>
    <location>
        <position position="243"/>
    </location>
</feature>
<comment type="function">
    <text evidence="2 5 6">Inhibits angiogenesis in the vitreous humor of the eye, and therefore represses neovascularization (By similarity). Binds collagen fibrils (PubMed:10636917, PubMed:12951322). May be involved in collagen fiber organization via regulation of other members of the small leucine-rich repeat proteoglycan superfamily (By similarity).</text>
</comment>
<comment type="subunit">
    <text evidence="6">Homodimer.</text>
</comment>
<comment type="subcellular location">
    <subcellularLocation>
        <location evidence="5">Secreted</location>
        <location evidence="5">Extracellular space</location>
        <location evidence="5">Extracellular matrix</location>
    </subcellularLocation>
</comment>
<comment type="PTM">
    <text evidence="6">O-glycosylated (sialylated oligosaccharides).</text>
</comment>
<comment type="PTM">
    <text evidence="3">Sulfated on tyrosine residues.</text>
</comment>
<comment type="PTM">
    <text evidence="3 7">Proteolytically cleaved by MMP1, MMP2, MMP3, MMP7, MMP8, MMP9, ADAMTS4, and ADAMTS5 (By similarity). Proteolytically cleaved by MMP13 (PubMed:18164633).</text>
</comment>
<comment type="similarity">
    <text evidence="8">Belongs to the small leucine-rich proteoglycan (SLRP) family. SLRP class III subfamily.</text>
</comment>
<evidence type="ECO:0000250" key="1"/>
<evidence type="ECO:0000250" key="2">
    <source>
        <dbReference type="UniProtKB" id="Q920A0"/>
    </source>
</evidence>
<evidence type="ECO:0000250" key="3">
    <source>
        <dbReference type="UniProtKB" id="Q9UBM4"/>
    </source>
</evidence>
<evidence type="ECO:0000255" key="4"/>
<evidence type="ECO:0000269" key="5">
    <source>
    </source>
</evidence>
<evidence type="ECO:0000269" key="6">
    <source>
    </source>
</evidence>
<evidence type="ECO:0000269" key="7">
    <source>
    </source>
</evidence>
<evidence type="ECO:0000305" key="8"/>
<protein>
    <recommendedName>
        <fullName>Opticin</fullName>
    </recommendedName>
    <alternativeName>
        <fullName>Oculoglycan</fullName>
    </alternativeName>
</protein>
<gene>
    <name type="primary">OPTC</name>
    <name type="synonym">OPT</name>
</gene>
<reference key="1">
    <citation type="journal article" date="2003" name="J. Biol. Chem.">
        <title>Characterization of opticin and evidence of stable dimerization in solution.</title>
        <authorList>
            <person name="Le Goff M.M."/>
            <person name="Hindson V.J."/>
            <person name="Jowitt T.A."/>
            <person name="Scott P.G."/>
            <person name="Bishop P.N."/>
        </authorList>
    </citation>
    <scope>NUCLEOTIDE SEQUENCE [MRNA]</scope>
    <scope>FUNCTION</scope>
    <scope>GLYCOSYLATION</scope>
    <scope>HOMODIMERIZATION</scope>
    <source>
        <tissue>Eye</tissue>
    </source>
</reference>
<reference key="2">
    <citation type="journal article" date="2000" name="J. Biol. Chem.">
        <title>Identification in vitreous and molecular cloning of opticin, a novel member of the family of leucine-rich repeat proteins of the extracellular matrix.</title>
        <authorList>
            <person name="Reardon A.J."/>
            <person name="Le Goff M."/>
            <person name="Briggs M.D."/>
            <person name="McLeod D."/>
            <person name="Sheehan J.K."/>
            <person name="Thornton D.J."/>
            <person name="Bishop P.N."/>
        </authorList>
    </citation>
    <scope>PROTEIN SEQUENCE OF 20-25; 188-192; 227-233; 238-243; 288-294 AND 295-309</scope>
    <scope>IDENTIFICATION BY MASS SPECTROMETRY</scope>
    <scope>FUNCTION</scope>
    <scope>SUBCELLULAR LOCATION</scope>
    <source>
        <tissue>Retina</tissue>
    </source>
</reference>
<reference key="3">
    <citation type="journal article" date="2008" name="Osteoarthritis Cartilage">
        <title>Identification of opticin, a member of the small leucine-rich repeat proteoglycan family, in human articular tissues: a novel target for MMP-13 in osteoarthritis.</title>
        <authorList>
            <person name="Monfort J."/>
            <person name="Tardif G."/>
            <person name="Roughley P."/>
            <person name="Reboul P."/>
            <person name="Boileau C."/>
            <person name="Bishop P.N."/>
            <person name="Pelletier J.P."/>
            <person name="Martel-Pelletier J."/>
        </authorList>
    </citation>
    <scope>CLEAVAGE BY MMP13</scope>
</reference>
<proteinExistence type="evidence at protein level"/>